<evidence type="ECO:0000256" key="1">
    <source>
        <dbReference type="SAM" id="MobiDB-lite"/>
    </source>
</evidence>
<evidence type="ECO:0000305" key="2"/>
<accession>Q50284</accession>
<sequence length="127" mass="14350">MLWPFRWVWWKRVLTSQTRAPAKPNPLTVPPTCTWWSLRKLPNPTKLDDDLKNLLDPNEVRARMLKSFGTENFTQPQPQPQALKTTTPVFGTSSGNLGSVLSGGGYHAGLKHHQSTVTRSTGEWVDR</sequence>
<reference key="1">
    <citation type="journal article" date="1996" name="Nucleic Acids Res.">
        <title>Sequence analysis of 56 kb from the genome of the bacterium Mycoplasma pneumoniae comprising the dnaA region, the atp operon and a cluster of ribosomal protein genes.</title>
        <authorList>
            <person name="Hilbert H."/>
            <person name="Himmelreich R."/>
            <person name="Plagens H."/>
            <person name="Herrmann R."/>
        </authorList>
    </citation>
    <scope>NUCLEOTIDE SEQUENCE [GENOMIC DNA]</scope>
    <source>
        <strain>ATCC 29342 / M129 / Subtype 1</strain>
    </source>
</reference>
<reference key="2">
    <citation type="journal article" date="1996" name="Nucleic Acids Res.">
        <title>Complete sequence analysis of the genome of the bacterium Mycoplasma pneumoniae.</title>
        <authorList>
            <person name="Himmelreich R."/>
            <person name="Hilbert H."/>
            <person name="Plagens H."/>
            <person name="Pirkl E."/>
            <person name="Li B.-C."/>
            <person name="Herrmann R."/>
        </authorList>
    </citation>
    <scope>NUCLEOTIDE SEQUENCE [LARGE SCALE GENOMIC DNA]</scope>
    <source>
        <strain>ATCC 29342 / M129 / Subtype 1</strain>
    </source>
</reference>
<proteinExistence type="uncertain"/>
<organism>
    <name type="scientific">Mycoplasma pneumoniae (strain ATCC 29342 / M129 / Subtype 1)</name>
    <name type="common">Mycoplasmoides pneumoniae</name>
    <dbReference type="NCBI Taxonomy" id="272634"/>
    <lineage>
        <taxon>Bacteria</taxon>
        <taxon>Bacillati</taxon>
        <taxon>Mycoplasmatota</taxon>
        <taxon>Mycoplasmoidales</taxon>
        <taxon>Mycoplasmoidaceae</taxon>
        <taxon>Mycoplasmoides</taxon>
    </lineage>
</organism>
<protein>
    <recommendedName>
        <fullName>Putative adhesin P1-like protein MPN_203</fullName>
    </recommendedName>
</protein>
<dbReference type="EMBL" id="U34795">
    <property type="protein sequence ID" value="AAC43677.1"/>
    <property type="molecule type" value="Genomic_DNA"/>
</dbReference>
<dbReference type="EMBL" id="U00089">
    <property type="protein sequence ID" value="AAB96276.1"/>
    <property type="molecule type" value="Genomic_DNA"/>
</dbReference>
<dbReference type="PIR" id="S62806">
    <property type="entry name" value="S62806"/>
</dbReference>
<dbReference type="SMR" id="Q50284"/>
<dbReference type="IntAct" id="Q50284">
    <property type="interactions" value="1"/>
</dbReference>
<dbReference type="EnsemblBacteria" id="AAB96276">
    <property type="protein sequence ID" value="AAB96276"/>
    <property type="gene ID" value="MPN_203"/>
</dbReference>
<dbReference type="KEGG" id="mpn:MPN_203"/>
<dbReference type="HOGENOM" id="CLU_1968119_0_0_14"/>
<dbReference type="Proteomes" id="UP000000808">
    <property type="component" value="Chromosome"/>
</dbReference>
<dbReference type="InterPro" id="IPR004940">
    <property type="entry name" value="Adhesin_P1_C"/>
</dbReference>
<dbReference type="Pfam" id="PF03257">
    <property type="entry name" value="Adhesin_P1_C"/>
    <property type="match status" value="1"/>
</dbReference>
<comment type="similarity">
    <text evidence="2">Belongs to the adhesin P1 family.</text>
</comment>
<comment type="caution">
    <text evidence="2">Could be the product of a pseudogene.</text>
</comment>
<keyword id="KW-1185">Reference proteome</keyword>
<name>Y203_MYCPN</name>
<feature type="chain" id="PRO_0000210711" description="Putative adhesin P1-like protein MPN_203">
    <location>
        <begin position="1"/>
        <end position="127"/>
    </location>
</feature>
<feature type="region of interest" description="Disordered" evidence="1">
    <location>
        <begin position="70"/>
        <end position="90"/>
    </location>
</feature>
<gene>
    <name type="ordered locus">MPN_203</name>
    <name type="ORF">GT9_orf127</name>
    <name type="ORF">MP628</name>
</gene>